<proteinExistence type="inferred from homology"/>
<sequence>MIKVGIIGATGYAGNELVRLLLGHKDAEIVWLGSRSYIDQNYSDVYRNMFKLVDAKCMDDNMEQLANEVDVIFTATPQGLCASLVNDEILSKTKIIDLSADFRLKDVNVYEQWYKLEHKAPQYIDEAVYGLCEINRDKVSKDTRIIANPGCYTTTSILTLYPMVKEGIINPDTIIIDAKSGTSGAGRGAKVANLFCEVNESMKAYGVGTHRHTPEIEEQLGYACGRDDLKLIFTPHLVPMNRGILVTAYANLAKDVTYEDVKAAYDKYYDKEYFVRVLPKDVCPETRWVEGSNFVDIGFKIEPRTNRLIMMGALDNLVKGAAGQAVQNMNLLFGLPENEGLQIAPMFP</sequence>
<evidence type="ECO:0000255" key="1">
    <source>
        <dbReference type="HAMAP-Rule" id="MF_00150"/>
    </source>
</evidence>
<feature type="chain" id="PRO_1000203403" description="N-acetyl-gamma-glutamyl-phosphate reductase">
    <location>
        <begin position="1"/>
        <end position="348"/>
    </location>
</feature>
<feature type="active site" evidence="1">
    <location>
        <position position="151"/>
    </location>
</feature>
<organism>
    <name type="scientific">Lachnospira eligens (strain ATCC 27750 / DSM 3376 / VPI C15-48 / C15-B4)</name>
    <name type="common">Eubacterium eligens</name>
    <dbReference type="NCBI Taxonomy" id="515620"/>
    <lineage>
        <taxon>Bacteria</taxon>
        <taxon>Bacillati</taxon>
        <taxon>Bacillota</taxon>
        <taxon>Clostridia</taxon>
        <taxon>Lachnospirales</taxon>
        <taxon>Lachnospiraceae</taxon>
        <taxon>Lachnospira</taxon>
    </lineage>
</organism>
<protein>
    <recommendedName>
        <fullName evidence="1">N-acetyl-gamma-glutamyl-phosphate reductase</fullName>
        <shortName evidence="1">AGPR</shortName>
        <ecNumber evidence="1">1.2.1.38</ecNumber>
    </recommendedName>
    <alternativeName>
        <fullName evidence="1">N-acetyl-glutamate semialdehyde dehydrogenase</fullName>
        <shortName evidence="1">NAGSA dehydrogenase</shortName>
    </alternativeName>
</protein>
<name>ARGC_LACE2</name>
<accession>C4Z4C2</accession>
<keyword id="KW-0028">Amino-acid biosynthesis</keyword>
<keyword id="KW-0055">Arginine biosynthesis</keyword>
<keyword id="KW-0963">Cytoplasm</keyword>
<keyword id="KW-0521">NADP</keyword>
<keyword id="KW-0560">Oxidoreductase</keyword>
<keyword id="KW-1185">Reference proteome</keyword>
<dbReference type="EC" id="1.2.1.38" evidence="1"/>
<dbReference type="EMBL" id="CP001104">
    <property type="protein sequence ID" value="ACR71606.1"/>
    <property type="molecule type" value="Genomic_DNA"/>
</dbReference>
<dbReference type="RefSeq" id="WP_012738842.1">
    <property type="nucleotide sequence ID" value="NC_012778.1"/>
</dbReference>
<dbReference type="SMR" id="C4Z4C2"/>
<dbReference type="STRING" id="515620.EUBELI_00593"/>
<dbReference type="GeneID" id="41355346"/>
<dbReference type="KEGG" id="eel:EUBELI_00593"/>
<dbReference type="eggNOG" id="COG0002">
    <property type="taxonomic scope" value="Bacteria"/>
</dbReference>
<dbReference type="HOGENOM" id="CLU_006384_0_1_9"/>
<dbReference type="UniPathway" id="UPA00068">
    <property type="reaction ID" value="UER00108"/>
</dbReference>
<dbReference type="Proteomes" id="UP000001476">
    <property type="component" value="Chromosome"/>
</dbReference>
<dbReference type="GO" id="GO:0005737">
    <property type="term" value="C:cytoplasm"/>
    <property type="evidence" value="ECO:0007669"/>
    <property type="project" value="UniProtKB-SubCell"/>
</dbReference>
<dbReference type="GO" id="GO:0003942">
    <property type="term" value="F:N-acetyl-gamma-glutamyl-phosphate reductase activity"/>
    <property type="evidence" value="ECO:0007669"/>
    <property type="project" value="UniProtKB-UniRule"/>
</dbReference>
<dbReference type="GO" id="GO:0051287">
    <property type="term" value="F:NAD binding"/>
    <property type="evidence" value="ECO:0007669"/>
    <property type="project" value="InterPro"/>
</dbReference>
<dbReference type="GO" id="GO:0070401">
    <property type="term" value="F:NADP+ binding"/>
    <property type="evidence" value="ECO:0007669"/>
    <property type="project" value="InterPro"/>
</dbReference>
<dbReference type="GO" id="GO:0006526">
    <property type="term" value="P:L-arginine biosynthetic process"/>
    <property type="evidence" value="ECO:0007669"/>
    <property type="project" value="UniProtKB-UniRule"/>
</dbReference>
<dbReference type="CDD" id="cd23934">
    <property type="entry name" value="AGPR_1_C"/>
    <property type="match status" value="1"/>
</dbReference>
<dbReference type="CDD" id="cd17895">
    <property type="entry name" value="AGPR_1_N"/>
    <property type="match status" value="1"/>
</dbReference>
<dbReference type="FunFam" id="3.30.360.10:FF:000014">
    <property type="entry name" value="N-acetyl-gamma-glutamyl-phosphate reductase"/>
    <property type="match status" value="1"/>
</dbReference>
<dbReference type="Gene3D" id="3.30.360.10">
    <property type="entry name" value="Dihydrodipicolinate Reductase, domain 2"/>
    <property type="match status" value="1"/>
</dbReference>
<dbReference type="Gene3D" id="3.40.50.720">
    <property type="entry name" value="NAD(P)-binding Rossmann-like Domain"/>
    <property type="match status" value="1"/>
</dbReference>
<dbReference type="HAMAP" id="MF_00150">
    <property type="entry name" value="ArgC_type1"/>
    <property type="match status" value="1"/>
</dbReference>
<dbReference type="InterPro" id="IPR023013">
    <property type="entry name" value="AGPR_AS"/>
</dbReference>
<dbReference type="InterPro" id="IPR000706">
    <property type="entry name" value="AGPR_type-1"/>
</dbReference>
<dbReference type="InterPro" id="IPR036291">
    <property type="entry name" value="NAD(P)-bd_dom_sf"/>
</dbReference>
<dbReference type="InterPro" id="IPR050085">
    <property type="entry name" value="NAGSA_dehydrogenase"/>
</dbReference>
<dbReference type="InterPro" id="IPR000534">
    <property type="entry name" value="Semialdehyde_DH_NAD-bd"/>
</dbReference>
<dbReference type="NCBIfam" id="TIGR01850">
    <property type="entry name" value="argC"/>
    <property type="match status" value="1"/>
</dbReference>
<dbReference type="PANTHER" id="PTHR32338:SF10">
    <property type="entry name" value="N-ACETYL-GAMMA-GLUTAMYL-PHOSPHATE REDUCTASE, CHLOROPLASTIC-RELATED"/>
    <property type="match status" value="1"/>
</dbReference>
<dbReference type="PANTHER" id="PTHR32338">
    <property type="entry name" value="N-ACETYL-GAMMA-GLUTAMYL-PHOSPHATE REDUCTASE, CHLOROPLASTIC-RELATED-RELATED"/>
    <property type="match status" value="1"/>
</dbReference>
<dbReference type="Pfam" id="PF01118">
    <property type="entry name" value="Semialdhyde_dh"/>
    <property type="match status" value="1"/>
</dbReference>
<dbReference type="Pfam" id="PF22698">
    <property type="entry name" value="Semialdhyde_dhC_1"/>
    <property type="match status" value="1"/>
</dbReference>
<dbReference type="SMART" id="SM00859">
    <property type="entry name" value="Semialdhyde_dh"/>
    <property type="match status" value="1"/>
</dbReference>
<dbReference type="SUPFAM" id="SSF55347">
    <property type="entry name" value="Glyceraldehyde-3-phosphate dehydrogenase-like, C-terminal domain"/>
    <property type="match status" value="1"/>
</dbReference>
<dbReference type="SUPFAM" id="SSF51735">
    <property type="entry name" value="NAD(P)-binding Rossmann-fold domains"/>
    <property type="match status" value="1"/>
</dbReference>
<dbReference type="PROSITE" id="PS01224">
    <property type="entry name" value="ARGC"/>
    <property type="match status" value="1"/>
</dbReference>
<comment type="function">
    <text evidence="1">Catalyzes the NADPH-dependent reduction of N-acetyl-5-glutamyl phosphate to yield N-acetyl-L-glutamate 5-semialdehyde.</text>
</comment>
<comment type="catalytic activity">
    <reaction evidence="1">
        <text>N-acetyl-L-glutamate 5-semialdehyde + phosphate + NADP(+) = N-acetyl-L-glutamyl 5-phosphate + NADPH + H(+)</text>
        <dbReference type="Rhea" id="RHEA:21588"/>
        <dbReference type="ChEBI" id="CHEBI:15378"/>
        <dbReference type="ChEBI" id="CHEBI:29123"/>
        <dbReference type="ChEBI" id="CHEBI:43474"/>
        <dbReference type="ChEBI" id="CHEBI:57783"/>
        <dbReference type="ChEBI" id="CHEBI:57936"/>
        <dbReference type="ChEBI" id="CHEBI:58349"/>
        <dbReference type="EC" id="1.2.1.38"/>
    </reaction>
</comment>
<comment type="pathway">
    <text evidence="1">Amino-acid biosynthesis; L-arginine biosynthesis; N(2)-acetyl-L-ornithine from L-glutamate: step 3/4.</text>
</comment>
<comment type="subcellular location">
    <subcellularLocation>
        <location evidence="1">Cytoplasm</location>
    </subcellularLocation>
</comment>
<comment type="similarity">
    <text evidence="1">Belongs to the NAGSA dehydrogenase family. Type 1 subfamily.</text>
</comment>
<gene>
    <name evidence="1" type="primary">argC</name>
    <name type="ordered locus">EUBELI_00593</name>
</gene>
<reference key="1">
    <citation type="journal article" date="2009" name="Proc. Natl. Acad. Sci. U.S.A.">
        <title>Characterizing a model human gut microbiota composed of members of its two dominant bacterial phyla.</title>
        <authorList>
            <person name="Mahowald M.A."/>
            <person name="Rey F.E."/>
            <person name="Seedorf H."/>
            <person name="Turnbaugh P.J."/>
            <person name="Fulton R.S."/>
            <person name="Wollam A."/>
            <person name="Shah N."/>
            <person name="Wang C."/>
            <person name="Magrini V."/>
            <person name="Wilson R.K."/>
            <person name="Cantarel B.L."/>
            <person name="Coutinho P.M."/>
            <person name="Henrissat B."/>
            <person name="Crock L.W."/>
            <person name="Russell A."/>
            <person name="Verberkmoes N.C."/>
            <person name="Hettich R.L."/>
            <person name="Gordon J.I."/>
        </authorList>
    </citation>
    <scope>NUCLEOTIDE SEQUENCE [LARGE SCALE GENOMIC DNA]</scope>
    <source>
        <strain>ATCC 27750 / DSM 3376 / VPI C15-48 / C15-B4</strain>
    </source>
</reference>